<dbReference type="EMBL" id="BX284603">
    <property type="protein sequence ID" value="CCD62632.1"/>
    <property type="molecule type" value="Genomic_DNA"/>
</dbReference>
<dbReference type="EMBL" id="BX284603">
    <property type="protein sequence ID" value="CCD62633.1"/>
    <property type="molecule type" value="Genomic_DNA"/>
</dbReference>
<dbReference type="PIR" id="G88523">
    <property type="entry name" value="G88523"/>
</dbReference>
<dbReference type="PIR" id="S44609">
    <property type="entry name" value="S44609"/>
</dbReference>
<dbReference type="RefSeq" id="NP_001379603.1">
    <molecule id="P34284-2"/>
    <property type="nucleotide sequence ID" value="NM_001392151.1"/>
</dbReference>
<dbReference type="RefSeq" id="NP_741248.1">
    <molecule id="P34284-1"/>
    <property type="nucleotide sequence ID" value="NM_171210.8"/>
</dbReference>
<dbReference type="RefSeq" id="NP_741249.1">
    <property type="nucleotide sequence ID" value="NM_171211.3"/>
</dbReference>
<dbReference type="SMR" id="P34284"/>
<dbReference type="BioGRID" id="532123">
    <property type="interactions" value="4"/>
</dbReference>
<dbReference type="FunCoup" id="P34284">
    <property type="interactions" value="2086"/>
</dbReference>
<dbReference type="IntAct" id="P34284">
    <property type="interactions" value="2"/>
</dbReference>
<dbReference type="MINT" id="P34284"/>
<dbReference type="STRING" id="6239.C02F5.7b.3"/>
<dbReference type="PaxDb" id="6239-C02F5.7b.2"/>
<dbReference type="PeptideAtlas" id="P34284"/>
<dbReference type="EnsemblMetazoa" id="C02F5.7a.1">
    <molecule id="P34284-2"/>
    <property type="protein sequence ID" value="C02F5.7a.1"/>
    <property type="gene ID" value="WBGene00015350"/>
</dbReference>
<dbReference type="EnsemblMetazoa" id="C02F5.7a.2">
    <molecule id="P34284-2"/>
    <property type="protein sequence ID" value="C02F5.7a.2"/>
    <property type="gene ID" value="WBGene00015350"/>
</dbReference>
<dbReference type="EnsemblMetazoa" id="C02F5.7b.1">
    <molecule id="P34284-1"/>
    <property type="protein sequence ID" value="C02F5.7b.1"/>
    <property type="gene ID" value="WBGene00015350"/>
</dbReference>
<dbReference type="GeneID" id="3564805"/>
<dbReference type="KEGG" id="cel:CELE_C02F5.7"/>
<dbReference type="UCSC" id="C02F5.7a.1">
    <molecule id="P34284-1"/>
    <property type="organism name" value="c. elegans"/>
</dbReference>
<dbReference type="AGR" id="WB:WBGene00015350"/>
<dbReference type="CTD" id="3564805"/>
<dbReference type="WormBase" id="C02F5.7a">
    <molecule id="P34284-2"/>
    <property type="protein sequence ID" value="CE24780"/>
    <property type="gene ID" value="WBGene00015350"/>
    <property type="gene designation" value="fbxl-1"/>
</dbReference>
<dbReference type="WormBase" id="C02F5.7b">
    <molecule id="P34284-1"/>
    <property type="protein sequence ID" value="CE30418"/>
    <property type="gene ID" value="WBGene00015350"/>
    <property type="gene designation" value="fbxl-1"/>
</dbReference>
<dbReference type="eggNOG" id="KOG4341">
    <property type="taxonomic scope" value="Eukaryota"/>
</dbReference>
<dbReference type="GeneTree" id="ENSGT00940000170586"/>
<dbReference type="HOGENOM" id="CLU_016072_7_1_1"/>
<dbReference type="InParanoid" id="P34284"/>
<dbReference type="OMA" id="LCNRIRY"/>
<dbReference type="OrthoDB" id="550575at2759"/>
<dbReference type="PhylomeDB" id="P34284"/>
<dbReference type="Reactome" id="R-CEL-8951664">
    <property type="pathway name" value="Neddylation"/>
</dbReference>
<dbReference type="Reactome" id="R-CEL-983168">
    <property type="pathway name" value="Antigen processing: Ubiquitination &amp; Proteasome degradation"/>
</dbReference>
<dbReference type="PRO" id="PR:P34284"/>
<dbReference type="Proteomes" id="UP000001940">
    <property type="component" value="Chromosome III"/>
</dbReference>
<dbReference type="Bgee" id="WBGene00015350">
    <property type="expression patterns" value="Expressed in pharyngeal muscle cell (C elegans) and 4 other cell types or tissues"/>
</dbReference>
<dbReference type="GO" id="GO:0030424">
    <property type="term" value="C:axon"/>
    <property type="evidence" value="ECO:0000314"/>
    <property type="project" value="UniProtKB"/>
</dbReference>
<dbReference type="GO" id="GO:0005929">
    <property type="term" value="C:cilium"/>
    <property type="evidence" value="ECO:0000314"/>
    <property type="project" value="UniProtKB"/>
</dbReference>
<dbReference type="GO" id="GO:0030425">
    <property type="term" value="C:dendrite"/>
    <property type="evidence" value="ECO:0000314"/>
    <property type="project" value="UniProtKB"/>
</dbReference>
<dbReference type="GO" id="GO:0043204">
    <property type="term" value="C:perikaryon"/>
    <property type="evidence" value="ECO:0000314"/>
    <property type="project" value="UniProtKB"/>
</dbReference>
<dbReference type="GO" id="GO:0019005">
    <property type="term" value="C:SCF ubiquitin ligase complex"/>
    <property type="evidence" value="ECO:0000318"/>
    <property type="project" value="GO_Central"/>
</dbReference>
<dbReference type="GO" id="GO:0043053">
    <property type="term" value="P:dauer entry"/>
    <property type="evidence" value="ECO:0000315"/>
    <property type="project" value="WormBase"/>
</dbReference>
<dbReference type="GO" id="GO:0035882">
    <property type="term" value="P:defecation rhythm"/>
    <property type="evidence" value="ECO:0000315"/>
    <property type="project" value="WormBase"/>
</dbReference>
<dbReference type="GO" id="GO:1905909">
    <property type="term" value="P:regulation of dauer entry"/>
    <property type="evidence" value="ECO:0000315"/>
    <property type="project" value="UniProtKB"/>
</dbReference>
<dbReference type="GO" id="GO:2000746">
    <property type="term" value="P:regulation of defecation rhythm"/>
    <property type="evidence" value="ECO:0000315"/>
    <property type="project" value="UniProtKB"/>
</dbReference>
<dbReference type="GO" id="GO:0031146">
    <property type="term" value="P:SCF-dependent proteasomal ubiquitin-dependent protein catabolic process"/>
    <property type="evidence" value="ECO:0000318"/>
    <property type="project" value="GO_Central"/>
</dbReference>
<dbReference type="CDD" id="cd22115">
    <property type="entry name" value="F-box_FBXL2-like"/>
    <property type="match status" value="1"/>
</dbReference>
<dbReference type="FunFam" id="3.80.10.10:FF:000042">
    <property type="entry name" value="F-box/LRR-repeat protein 20 isoform 2"/>
    <property type="match status" value="1"/>
</dbReference>
<dbReference type="FunFam" id="3.80.10.10:FF:001450">
    <property type="entry name" value="Uncharacterized F-box/LRR-repeat protein C02F5.7"/>
    <property type="match status" value="1"/>
</dbReference>
<dbReference type="Gene3D" id="3.80.10.10">
    <property type="entry name" value="Ribonuclease Inhibitor"/>
    <property type="match status" value="2"/>
</dbReference>
<dbReference type="InterPro" id="IPR001810">
    <property type="entry name" value="F-box_dom"/>
</dbReference>
<dbReference type="InterPro" id="IPR001611">
    <property type="entry name" value="Leu-rich_rpt"/>
</dbReference>
<dbReference type="InterPro" id="IPR006553">
    <property type="entry name" value="Leu-rich_rpt_Cys-con_subtyp"/>
</dbReference>
<dbReference type="InterPro" id="IPR032675">
    <property type="entry name" value="LRR_dom_sf"/>
</dbReference>
<dbReference type="PANTHER" id="PTHR13318:SF95">
    <property type="entry name" value="F-BOX PROTEIN YLR352W"/>
    <property type="match status" value="1"/>
</dbReference>
<dbReference type="PANTHER" id="PTHR13318">
    <property type="entry name" value="PARTNER OF PAIRED, ISOFORM B-RELATED"/>
    <property type="match status" value="1"/>
</dbReference>
<dbReference type="Pfam" id="PF12937">
    <property type="entry name" value="F-box-like"/>
    <property type="match status" value="1"/>
</dbReference>
<dbReference type="Pfam" id="PF13516">
    <property type="entry name" value="LRR_6"/>
    <property type="match status" value="3"/>
</dbReference>
<dbReference type="SMART" id="SM00256">
    <property type="entry name" value="FBOX"/>
    <property type="match status" value="1"/>
</dbReference>
<dbReference type="SMART" id="SM00367">
    <property type="entry name" value="LRR_CC"/>
    <property type="match status" value="11"/>
</dbReference>
<dbReference type="SUPFAM" id="SSF52047">
    <property type="entry name" value="RNI-like"/>
    <property type="match status" value="1"/>
</dbReference>
<dbReference type="PROSITE" id="PS50181">
    <property type="entry name" value="FBOX"/>
    <property type="match status" value="1"/>
</dbReference>
<reference key="1">
    <citation type="journal article" date="1994" name="Nature">
        <title>2.2 Mb of contiguous nucleotide sequence from chromosome III of C. elegans.</title>
        <authorList>
            <person name="Wilson R."/>
            <person name="Ainscough R."/>
            <person name="Anderson K."/>
            <person name="Baynes C."/>
            <person name="Berks M."/>
            <person name="Bonfield J."/>
            <person name="Burton J."/>
            <person name="Connell M."/>
            <person name="Copsey T."/>
            <person name="Cooper J."/>
            <person name="Coulson A."/>
            <person name="Craxton M."/>
            <person name="Dear S."/>
            <person name="Du Z."/>
            <person name="Durbin R."/>
            <person name="Favello A."/>
            <person name="Fraser A."/>
            <person name="Fulton L."/>
            <person name="Gardner A."/>
            <person name="Green P."/>
            <person name="Hawkins T."/>
            <person name="Hillier L."/>
            <person name="Jier M."/>
            <person name="Johnston L."/>
            <person name="Jones M."/>
            <person name="Kershaw J."/>
            <person name="Kirsten J."/>
            <person name="Laisster N."/>
            <person name="Latreille P."/>
            <person name="Lightning J."/>
            <person name="Lloyd C."/>
            <person name="Mortimore B."/>
            <person name="O'Callaghan M."/>
            <person name="Parsons J."/>
            <person name="Percy C."/>
            <person name="Rifken L."/>
            <person name="Roopra A."/>
            <person name="Saunders D."/>
            <person name="Shownkeen R."/>
            <person name="Sims M."/>
            <person name="Smaldon N."/>
            <person name="Smith A."/>
            <person name="Smith M."/>
            <person name="Sonnhammer E."/>
            <person name="Staden R."/>
            <person name="Sulston J."/>
            <person name="Thierry-Mieg J."/>
            <person name="Thomas K."/>
            <person name="Vaudin M."/>
            <person name="Vaughan K."/>
            <person name="Waterston R."/>
            <person name="Watson A."/>
            <person name="Weinstock L."/>
            <person name="Wilkinson-Sproat J."/>
            <person name="Wohldman P."/>
        </authorList>
    </citation>
    <scope>NUCLEOTIDE SEQUENCE [LARGE SCALE GENOMIC DNA]</scope>
    <source>
        <strain>Bristol N2</strain>
    </source>
</reference>
<reference key="2">
    <citation type="journal article" date="1998" name="Science">
        <title>Genome sequence of the nematode C. elegans: a platform for investigating biology.</title>
        <authorList>
            <consortium name="The C. elegans sequencing consortium"/>
        </authorList>
    </citation>
    <scope>NUCLEOTIDE SEQUENCE [LARGE SCALE GENOMIC DNA]</scope>
    <source>
        <strain>Bristol N2</strain>
    </source>
</reference>
<reference key="3">
    <citation type="journal article" date="2012" name="Anim. Cells Syst. (Seoul)">
        <title>A novel F-box protein with leucine-rich repeats affects defecation frequency and daumone response in Caenorhabditis elegans.</title>
        <authorList>
            <person name="Kim S.M."/>
            <person name="Jang S.H."/>
            <person name="Son N."/>
            <person name="Han C.T."/>
            <person name="Min K."/>
            <person name="Lee H."/>
            <person name="Hwang S.Y."/>
        </authorList>
    </citation>
    <scope>FUNCTION</scope>
    <scope>SUBCELLULAR LOCATION</scope>
    <scope>TISSUE SPECIFICITY</scope>
    <scope>DISRUPTION PHENOTYPE</scope>
</reference>
<reference key="4">
    <citation type="journal article" date="2017" name="Anim. Cells Syst. (Seoul)">
        <title>CFL-1, a novel F-box protein with leucine-rich repeat may interact with UNC-10 for the regulation of defecation and daumone response in Caenorhabditis elegans.</title>
        <authorList>
            <person name="Kim S.M."/>
            <person name="Hwang S.Y."/>
        </authorList>
    </citation>
    <scope>FUNCTION</scope>
    <scope>DISRUPTION PHENOTYPE</scope>
</reference>
<proteinExistence type="evidence at transcript level"/>
<accession>P34284</accession>
<accession>Q8T3G0</accession>
<organism>
    <name type="scientific">Caenorhabditis elegans</name>
    <dbReference type="NCBI Taxonomy" id="6239"/>
    <lineage>
        <taxon>Eukaryota</taxon>
        <taxon>Metazoa</taxon>
        <taxon>Ecdysozoa</taxon>
        <taxon>Nematoda</taxon>
        <taxon>Chromadorea</taxon>
        <taxon>Rhabditida</taxon>
        <taxon>Rhabditina</taxon>
        <taxon>Rhabditomorpha</taxon>
        <taxon>Rhabditoidea</taxon>
        <taxon>Rhabditidae</taxon>
        <taxon>Peloderinae</taxon>
        <taxon>Caenorhabditis</taxon>
    </lineage>
</organism>
<feature type="chain" id="PRO_0000119981" description="F-box/LRR-repeat protein fbxl-1">
    <location>
        <begin position="1"/>
        <end position="466"/>
    </location>
</feature>
<feature type="domain" description="F-box" evidence="2">
    <location>
        <begin position="54"/>
        <end position="100"/>
    </location>
</feature>
<feature type="repeat" description="LRR 1">
    <location>
        <begin position="122"/>
        <end position="147"/>
    </location>
</feature>
<feature type="repeat" description="LRR 2">
    <location>
        <begin position="148"/>
        <end position="173"/>
    </location>
</feature>
<feature type="repeat" description="LRR 3">
    <location>
        <begin position="174"/>
        <end position="199"/>
    </location>
</feature>
<feature type="repeat" description="LRR 4">
    <location>
        <begin position="200"/>
        <end position="225"/>
    </location>
</feature>
<feature type="repeat" description="LRR 5">
    <location>
        <begin position="226"/>
        <end position="251"/>
    </location>
</feature>
<feature type="repeat" description="LRR 6">
    <location>
        <begin position="252"/>
        <end position="277"/>
    </location>
</feature>
<feature type="repeat" description="LRR 7">
    <location>
        <begin position="278"/>
        <end position="303"/>
    </location>
</feature>
<feature type="repeat" description="LRR 8">
    <location>
        <begin position="304"/>
        <end position="329"/>
    </location>
</feature>
<feature type="repeat" description="LRR 9">
    <location>
        <begin position="330"/>
        <end position="355"/>
    </location>
</feature>
<feature type="repeat" description="LRR 10">
    <location>
        <begin position="356"/>
        <end position="381"/>
    </location>
</feature>
<feature type="repeat" description="LRR 11">
    <location>
        <begin position="408"/>
        <end position="433"/>
    </location>
</feature>
<feature type="splice variant" id="VSP_015950" description="In isoform a." evidence="6">
    <original>ICRCCVIL</original>
    <variation>MLF</variation>
    <location>
        <begin position="459"/>
        <end position="466"/>
    </location>
</feature>
<keyword id="KW-0025">Alternative splicing</keyword>
<keyword id="KW-0966">Cell projection</keyword>
<keyword id="KW-0433">Leucine-rich repeat</keyword>
<keyword id="KW-1185">Reference proteome</keyword>
<keyword id="KW-0677">Repeat</keyword>
<keyword id="KW-0833">Ubl conjugation pathway</keyword>
<comment type="function">
    <text evidence="1 3 4">Substrate-recognition component of the SCF (SKP1-CUL1-F-box protein)-type E3 ubiquitin ligase complex (By similarity). Plays a role in regulating the entry into the dauer state (PubMed:30460068, Ref.3). In hermaphrodites, may play a role in modulating the rate of defecation (PubMed:30460068, Ref.3).</text>
</comment>
<comment type="subunit">
    <text evidence="1">Component of the SCF (SKP1-CUL1-F-box protein)-type E3 ubiquitin ligase complex.</text>
</comment>
<comment type="subcellular location">
    <subcellularLocation>
        <location evidence="4">Perikaryon</location>
    </subcellularLocation>
    <subcellularLocation>
        <location evidence="4">Cell projection</location>
        <location evidence="4">Dendrite</location>
    </subcellularLocation>
    <subcellularLocation>
        <location evidence="4">Cell projection</location>
        <location evidence="4">Cilium</location>
    </subcellularLocation>
    <subcellularLocation>
        <location evidence="4">Cell projection</location>
        <location evidence="4">Axon</location>
    </subcellularLocation>
</comment>
<comment type="alternative products">
    <event type="alternative splicing"/>
    <isoform>
        <id>P34284-1</id>
        <name evidence="7">b</name>
        <sequence type="displayed"/>
    </isoform>
    <isoform>
        <id>P34284-2</id>
        <name evidence="7">a</name>
        <sequence type="described" ref="VSP_015950"/>
    </isoform>
</comment>
<comment type="tissue specificity">
    <text evidence="4">Expressed in neuroglial cells such as the socket cell and sheath cell, neurosecretory motor neurons and regions around the pharynx and anus.</text>
</comment>
<comment type="disruption phenotype">
    <text evidence="3 4">RNAi-mediated knockdown reduces the rate of dauer formation following treatment with daumone, a pheromone which induces the dauer state (PubMed:30460068, Ref.3). RNAi-mediated knockdown results in a 10-20% increase in the average time interval between defecations in hermaphrodites (PubMed:30460068, Ref.3).</text>
</comment>
<protein>
    <recommendedName>
        <fullName evidence="6">F-box/LRR-repeat protein fbxl-1</fullName>
    </recommendedName>
    <alternativeName>
        <fullName evidence="7">F-box and leucine-rich repeat protein 1</fullName>
    </alternativeName>
</protein>
<sequence length="466" mass="52065">METAERISAAASAASSRRAKRLAQQAHKTHPVIQAKQNQMYLITTLSPAQVDNSLINRVLPKEVLLKVFSFLDTKALCRSAQVCRSWSILALDGSNWQRVDLFTFQRDVKTAVVENLARRCGGFLKELSLKGCENVHDSALRTFTSRCPNLEHLSLYRCKRVTDASCENLGRYCHKLNYLNLENCSSITDRAMKYIGDGCPNLSYLNISWCDAIQDRGVQIILSNCKSLDTLILRGCEGLTENVFGSVEAHMGAIKKLNLLQCFQLTDITVQNIANGATALEYLCMSNCNQISDRSLVSLGQHSHNLKVLELSGCTLLGDNGFIPLARGCRQLERLDMEDCSLISDHTINSLANNCTALRELSLSHCELITDESIQNLASKHRETLNVLELDNCPQLTDSTLSHLRHCKALKRIDLYDCQNVSKEAIVRFQHHRPNIEIHAYFAPVTPPTDQVVNRGGICRCCVIL</sequence>
<name>FBXL_CAEEL</name>
<gene>
    <name evidence="7" type="primary">fbxl-1</name>
    <name evidence="5 7" type="synonym">cfl-1</name>
    <name evidence="7" type="ORF">C02F5.7</name>
</gene>
<evidence type="ECO:0000250" key="1">
    <source>
        <dbReference type="UniProtKB" id="Q9CZV8"/>
    </source>
</evidence>
<evidence type="ECO:0000255" key="2">
    <source>
        <dbReference type="PROSITE-ProRule" id="PRU00080"/>
    </source>
</evidence>
<evidence type="ECO:0000269" key="3">
    <source>
    </source>
</evidence>
<evidence type="ECO:0000269" key="4">
    <source ref="3"/>
</evidence>
<evidence type="ECO:0000303" key="5">
    <source ref="3"/>
</evidence>
<evidence type="ECO:0000305" key="6"/>
<evidence type="ECO:0000312" key="7">
    <source>
        <dbReference type="WormBase" id="C02F5.7b"/>
    </source>
</evidence>